<sequence length="316" mass="34845">MNDVTEASLPKAIFLMGPTASGKTALAIALRKVLPVELISVDSALIYRGMDIGTAKPDAAELSAAPHRLLDILDPAEAYSAADFRRDALAAMADIVAAGRIPLLVGGTMLYFKALLEGLSPLPSADPEVRARIEQQAAEQGWNALHQQLQEIDPVAAARIHPNDPQRLSRALEVFFISGKTLTELTQTSGDALPYQVHQFAIAPASRELLHQRIEQRFHQMLASGFEAEVRALFARGDLHTDMPSIRCVGYRQMWSYLNGEIPYDEMVYRGVCATRQLAKRQVTWLRGWEGVHWLDSEQPEQALNKVLQVVGASQN</sequence>
<comment type="function">
    <text evidence="1">Catalyzes the transfer of a dimethylallyl group onto the adenine at position 37 in tRNAs that read codons beginning with uridine, leading to the formation of N6-(dimethylallyl)adenosine (i(6)A).</text>
</comment>
<comment type="catalytic activity">
    <reaction evidence="1">
        <text>adenosine(37) in tRNA + dimethylallyl diphosphate = N(6)-dimethylallyladenosine(37) in tRNA + diphosphate</text>
        <dbReference type="Rhea" id="RHEA:26482"/>
        <dbReference type="Rhea" id="RHEA-COMP:10162"/>
        <dbReference type="Rhea" id="RHEA-COMP:10375"/>
        <dbReference type="ChEBI" id="CHEBI:33019"/>
        <dbReference type="ChEBI" id="CHEBI:57623"/>
        <dbReference type="ChEBI" id="CHEBI:74411"/>
        <dbReference type="ChEBI" id="CHEBI:74415"/>
        <dbReference type="EC" id="2.5.1.75"/>
    </reaction>
</comment>
<comment type="cofactor">
    <cofactor evidence="1">
        <name>Mg(2+)</name>
        <dbReference type="ChEBI" id="CHEBI:18420"/>
    </cofactor>
</comment>
<comment type="subunit">
    <text evidence="1">Monomer.</text>
</comment>
<comment type="similarity">
    <text evidence="1">Belongs to the IPP transferase family.</text>
</comment>
<reference key="1">
    <citation type="submission" date="2006-09" db="EMBL/GenBank/DDBJ databases">
        <authorList>
            <consortium name="The Klebsiella pneumonia Genome Sequencing Project"/>
            <person name="McClelland M."/>
            <person name="Sanderson E.K."/>
            <person name="Spieth J."/>
            <person name="Clifton W.S."/>
            <person name="Latreille P."/>
            <person name="Sabo A."/>
            <person name="Pepin K."/>
            <person name="Bhonagiri V."/>
            <person name="Porwollik S."/>
            <person name="Ali J."/>
            <person name="Wilson R.K."/>
        </authorList>
    </citation>
    <scope>NUCLEOTIDE SEQUENCE [LARGE SCALE GENOMIC DNA]</scope>
    <source>
        <strain>ATCC 700721 / MGH 78578</strain>
    </source>
</reference>
<name>MIAA_KLEP7</name>
<feature type="chain" id="PRO_1000020609" description="tRNA dimethylallyltransferase">
    <location>
        <begin position="1"/>
        <end position="316"/>
    </location>
</feature>
<feature type="region of interest" description="Interaction with substrate tRNA" evidence="1">
    <location>
        <begin position="42"/>
        <end position="45"/>
    </location>
</feature>
<feature type="region of interest" description="Interaction with substrate tRNA" evidence="1">
    <location>
        <begin position="166"/>
        <end position="170"/>
    </location>
</feature>
<feature type="region of interest" description="Interaction with substrate tRNA" evidence="1">
    <location>
        <begin position="247"/>
        <end position="252"/>
    </location>
</feature>
<feature type="binding site" evidence="1">
    <location>
        <begin position="17"/>
        <end position="24"/>
    </location>
    <ligand>
        <name>ATP</name>
        <dbReference type="ChEBI" id="CHEBI:30616"/>
    </ligand>
</feature>
<feature type="binding site" evidence="1">
    <location>
        <begin position="19"/>
        <end position="24"/>
    </location>
    <ligand>
        <name>substrate</name>
    </ligand>
</feature>
<feature type="site" description="Interaction with substrate tRNA" evidence="1">
    <location>
        <position position="108"/>
    </location>
</feature>
<feature type="site" description="Interaction with substrate tRNA" evidence="1">
    <location>
        <position position="130"/>
    </location>
</feature>
<gene>
    <name evidence="1" type="primary">miaA</name>
    <name type="ordered locus">KPN78578_44960</name>
    <name type="ORF">KPN_04569</name>
</gene>
<proteinExistence type="inferred from homology"/>
<organism>
    <name type="scientific">Klebsiella pneumoniae subsp. pneumoniae (strain ATCC 700721 / MGH 78578)</name>
    <dbReference type="NCBI Taxonomy" id="272620"/>
    <lineage>
        <taxon>Bacteria</taxon>
        <taxon>Pseudomonadati</taxon>
        <taxon>Pseudomonadota</taxon>
        <taxon>Gammaproteobacteria</taxon>
        <taxon>Enterobacterales</taxon>
        <taxon>Enterobacteriaceae</taxon>
        <taxon>Klebsiella/Raoultella group</taxon>
        <taxon>Klebsiella</taxon>
        <taxon>Klebsiella pneumoniae complex</taxon>
    </lineage>
</organism>
<evidence type="ECO:0000255" key="1">
    <source>
        <dbReference type="HAMAP-Rule" id="MF_00185"/>
    </source>
</evidence>
<accession>A6TH86</accession>
<protein>
    <recommendedName>
        <fullName evidence="1">tRNA dimethylallyltransferase</fullName>
        <ecNumber evidence="1">2.5.1.75</ecNumber>
    </recommendedName>
    <alternativeName>
        <fullName evidence="1">Dimethylallyl diphosphate:tRNA dimethylallyltransferase</fullName>
        <shortName evidence="1">DMAPP:tRNA dimethylallyltransferase</shortName>
        <shortName evidence="1">DMATase</shortName>
    </alternativeName>
    <alternativeName>
        <fullName evidence="1">Isopentenyl-diphosphate:tRNA isopentenyltransferase</fullName>
        <shortName evidence="1">IPP transferase</shortName>
        <shortName evidence="1">IPPT</shortName>
        <shortName evidence="1">IPTase</shortName>
    </alternativeName>
</protein>
<dbReference type="EC" id="2.5.1.75" evidence="1"/>
<dbReference type="EMBL" id="CP000647">
    <property type="protein sequence ID" value="ABR79920.1"/>
    <property type="molecule type" value="Genomic_DNA"/>
</dbReference>
<dbReference type="RefSeq" id="WP_002885652.1">
    <property type="nucleotide sequence ID" value="NC_009648.1"/>
</dbReference>
<dbReference type="SMR" id="A6TH86"/>
<dbReference type="STRING" id="272620.KPN_04569"/>
<dbReference type="PaxDb" id="272620-KPN_04569"/>
<dbReference type="EnsemblBacteria" id="ABR79920">
    <property type="protein sequence ID" value="ABR79920"/>
    <property type="gene ID" value="KPN_04569"/>
</dbReference>
<dbReference type="GeneID" id="93275425"/>
<dbReference type="KEGG" id="kpn:KPN_04569"/>
<dbReference type="HOGENOM" id="CLU_032616_0_0_6"/>
<dbReference type="Proteomes" id="UP000000265">
    <property type="component" value="Chromosome"/>
</dbReference>
<dbReference type="GO" id="GO:0005524">
    <property type="term" value="F:ATP binding"/>
    <property type="evidence" value="ECO:0007669"/>
    <property type="project" value="UniProtKB-UniRule"/>
</dbReference>
<dbReference type="GO" id="GO:0052381">
    <property type="term" value="F:tRNA dimethylallyltransferase activity"/>
    <property type="evidence" value="ECO:0007669"/>
    <property type="project" value="UniProtKB-UniRule"/>
</dbReference>
<dbReference type="GO" id="GO:0006400">
    <property type="term" value="P:tRNA modification"/>
    <property type="evidence" value="ECO:0007669"/>
    <property type="project" value="TreeGrafter"/>
</dbReference>
<dbReference type="FunFam" id="1.10.20.140:FF:000001">
    <property type="entry name" value="tRNA dimethylallyltransferase"/>
    <property type="match status" value="1"/>
</dbReference>
<dbReference type="FunFam" id="1.10.287.890:FF:000001">
    <property type="entry name" value="tRNA dimethylallyltransferase"/>
    <property type="match status" value="1"/>
</dbReference>
<dbReference type="Gene3D" id="1.10.20.140">
    <property type="match status" value="1"/>
</dbReference>
<dbReference type="Gene3D" id="1.10.287.890">
    <property type="entry name" value="Crystal structure of tRNA isopentenylpyrophosphate transferase (bh2366) domain"/>
    <property type="match status" value="1"/>
</dbReference>
<dbReference type="Gene3D" id="3.40.50.300">
    <property type="entry name" value="P-loop containing nucleotide triphosphate hydrolases"/>
    <property type="match status" value="1"/>
</dbReference>
<dbReference type="HAMAP" id="MF_00185">
    <property type="entry name" value="IPP_trans"/>
    <property type="match status" value="1"/>
</dbReference>
<dbReference type="InterPro" id="IPR039657">
    <property type="entry name" value="Dimethylallyltransferase"/>
</dbReference>
<dbReference type="InterPro" id="IPR018022">
    <property type="entry name" value="IPT"/>
</dbReference>
<dbReference type="InterPro" id="IPR027417">
    <property type="entry name" value="P-loop_NTPase"/>
</dbReference>
<dbReference type="NCBIfam" id="TIGR00174">
    <property type="entry name" value="miaA"/>
    <property type="match status" value="1"/>
</dbReference>
<dbReference type="PANTHER" id="PTHR11088">
    <property type="entry name" value="TRNA DIMETHYLALLYLTRANSFERASE"/>
    <property type="match status" value="1"/>
</dbReference>
<dbReference type="PANTHER" id="PTHR11088:SF60">
    <property type="entry name" value="TRNA DIMETHYLALLYLTRANSFERASE"/>
    <property type="match status" value="1"/>
</dbReference>
<dbReference type="Pfam" id="PF01715">
    <property type="entry name" value="IPPT"/>
    <property type="match status" value="1"/>
</dbReference>
<dbReference type="SUPFAM" id="SSF52540">
    <property type="entry name" value="P-loop containing nucleoside triphosphate hydrolases"/>
    <property type="match status" value="1"/>
</dbReference>
<keyword id="KW-0067">ATP-binding</keyword>
<keyword id="KW-0460">Magnesium</keyword>
<keyword id="KW-0547">Nucleotide-binding</keyword>
<keyword id="KW-0808">Transferase</keyword>
<keyword id="KW-0819">tRNA processing</keyword>